<comment type="function">
    <text evidence="1">Methyltransferase required for the conversion of demethylmenaquinol (DMKH2) to menaquinol (MKH2).</text>
</comment>
<comment type="catalytic activity">
    <reaction evidence="1">
        <text>a 2-demethylmenaquinol + S-adenosyl-L-methionine = a menaquinol + S-adenosyl-L-homocysteine + H(+)</text>
        <dbReference type="Rhea" id="RHEA:42640"/>
        <dbReference type="Rhea" id="RHEA-COMP:9539"/>
        <dbReference type="Rhea" id="RHEA-COMP:9563"/>
        <dbReference type="ChEBI" id="CHEBI:15378"/>
        <dbReference type="ChEBI" id="CHEBI:18151"/>
        <dbReference type="ChEBI" id="CHEBI:55437"/>
        <dbReference type="ChEBI" id="CHEBI:57856"/>
        <dbReference type="ChEBI" id="CHEBI:59789"/>
        <dbReference type="EC" id="2.1.1.163"/>
    </reaction>
</comment>
<comment type="pathway">
    <text evidence="1">Quinol/quinone metabolism; menaquinone biosynthesis; menaquinol from 1,4-dihydroxy-2-naphthoate: step 2/2.</text>
</comment>
<comment type="similarity">
    <text evidence="1">Belongs to the class I-like SAM-binding methyltransferase superfamily. MenG/UbiE family.</text>
</comment>
<name>MENG_CHLTE</name>
<dbReference type="EC" id="2.1.1.163" evidence="1"/>
<dbReference type="EMBL" id="AE006470">
    <property type="protein sequence ID" value="AAM71705.1"/>
    <property type="molecule type" value="Genomic_DNA"/>
</dbReference>
<dbReference type="RefSeq" id="NP_661363.1">
    <property type="nucleotide sequence ID" value="NC_002932.3"/>
</dbReference>
<dbReference type="SMR" id="Q8KF69"/>
<dbReference type="STRING" id="194439.CT0462"/>
<dbReference type="EnsemblBacteria" id="AAM71705">
    <property type="protein sequence ID" value="AAM71705"/>
    <property type="gene ID" value="CT0462"/>
</dbReference>
<dbReference type="KEGG" id="cte:CT0462"/>
<dbReference type="PATRIC" id="fig|194439.7.peg.447"/>
<dbReference type="eggNOG" id="COG2226">
    <property type="taxonomic scope" value="Bacteria"/>
</dbReference>
<dbReference type="HOGENOM" id="CLU_037990_0_0_10"/>
<dbReference type="OrthoDB" id="9808140at2"/>
<dbReference type="UniPathway" id="UPA00079">
    <property type="reaction ID" value="UER00169"/>
</dbReference>
<dbReference type="Proteomes" id="UP000001007">
    <property type="component" value="Chromosome"/>
</dbReference>
<dbReference type="GO" id="GO:0043770">
    <property type="term" value="F:demethylmenaquinone methyltransferase activity"/>
    <property type="evidence" value="ECO:0007669"/>
    <property type="project" value="UniProtKB-UniRule"/>
</dbReference>
<dbReference type="GO" id="GO:0009234">
    <property type="term" value="P:menaquinone biosynthetic process"/>
    <property type="evidence" value="ECO:0007669"/>
    <property type="project" value="UniProtKB-UniRule"/>
</dbReference>
<dbReference type="GO" id="GO:0032259">
    <property type="term" value="P:methylation"/>
    <property type="evidence" value="ECO:0007669"/>
    <property type="project" value="UniProtKB-KW"/>
</dbReference>
<dbReference type="CDD" id="cd02440">
    <property type="entry name" value="AdoMet_MTases"/>
    <property type="match status" value="1"/>
</dbReference>
<dbReference type="Gene3D" id="3.40.50.150">
    <property type="entry name" value="Vaccinia Virus protein VP39"/>
    <property type="match status" value="1"/>
</dbReference>
<dbReference type="HAMAP" id="MF_01813">
    <property type="entry name" value="MenG_UbiE_methyltr"/>
    <property type="match status" value="1"/>
</dbReference>
<dbReference type="InterPro" id="IPR029063">
    <property type="entry name" value="SAM-dependent_MTases_sf"/>
</dbReference>
<dbReference type="InterPro" id="IPR004033">
    <property type="entry name" value="UbiE/COQ5_MeTrFase"/>
</dbReference>
<dbReference type="InterPro" id="IPR023576">
    <property type="entry name" value="UbiE/COQ5_MeTrFase_CS"/>
</dbReference>
<dbReference type="NCBIfam" id="TIGR01934">
    <property type="entry name" value="MenG_MenH_UbiE"/>
    <property type="match status" value="1"/>
</dbReference>
<dbReference type="NCBIfam" id="NF001244">
    <property type="entry name" value="PRK00216.1-5"/>
    <property type="match status" value="1"/>
</dbReference>
<dbReference type="PANTHER" id="PTHR43591:SF24">
    <property type="entry name" value="2-METHOXY-6-POLYPRENYL-1,4-BENZOQUINOL METHYLASE, MITOCHONDRIAL"/>
    <property type="match status" value="1"/>
</dbReference>
<dbReference type="PANTHER" id="PTHR43591">
    <property type="entry name" value="METHYLTRANSFERASE"/>
    <property type="match status" value="1"/>
</dbReference>
<dbReference type="Pfam" id="PF01209">
    <property type="entry name" value="Ubie_methyltran"/>
    <property type="match status" value="1"/>
</dbReference>
<dbReference type="SUPFAM" id="SSF53335">
    <property type="entry name" value="S-adenosyl-L-methionine-dependent methyltransferases"/>
    <property type="match status" value="1"/>
</dbReference>
<dbReference type="PROSITE" id="PS51608">
    <property type="entry name" value="SAM_MT_UBIE"/>
    <property type="match status" value="1"/>
</dbReference>
<dbReference type="PROSITE" id="PS01183">
    <property type="entry name" value="UBIE_1"/>
    <property type="match status" value="1"/>
</dbReference>
<evidence type="ECO:0000255" key="1">
    <source>
        <dbReference type="HAMAP-Rule" id="MF_01813"/>
    </source>
</evidence>
<feature type="chain" id="PRO_0000193266" description="Demethylmenaquinone methyltransferase">
    <location>
        <begin position="1"/>
        <end position="242"/>
    </location>
</feature>
<feature type="binding site" evidence="1">
    <location>
        <position position="74"/>
    </location>
    <ligand>
        <name>S-adenosyl-L-methionine</name>
        <dbReference type="ChEBI" id="CHEBI:59789"/>
    </ligand>
</feature>
<feature type="binding site" evidence="1">
    <location>
        <position position="93"/>
    </location>
    <ligand>
        <name>S-adenosyl-L-methionine</name>
        <dbReference type="ChEBI" id="CHEBI:59789"/>
    </ligand>
</feature>
<reference key="1">
    <citation type="journal article" date="2002" name="Proc. Natl. Acad. Sci. U.S.A.">
        <title>The complete genome sequence of Chlorobium tepidum TLS, a photosynthetic, anaerobic, green-sulfur bacterium.</title>
        <authorList>
            <person name="Eisen J.A."/>
            <person name="Nelson K.E."/>
            <person name="Paulsen I.T."/>
            <person name="Heidelberg J.F."/>
            <person name="Wu M."/>
            <person name="Dodson R.J."/>
            <person name="DeBoy R.T."/>
            <person name="Gwinn M.L."/>
            <person name="Nelson W.C."/>
            <person name="Haft D.H."/>
            <person name="Hickey E.K."/>
            <person name="Peterson J.D."/>
            <person name="Durkin A.S."/>
            <person name="Kolonay J.F."/>
            <person name="Yang F."/>
            <person name="Holt I.E."/>
            <person name="Umayam L.A."/>
            <person name="Mason T.M."/>
            <person name="Brenner M."/>
            <person name="Shea T.P."/>
            <person name="Parksey D.S."/>
            <person name="Nierman W.C."/>
            <person name="Feldblyum T.V."/>
            <person name="Hansen C.L."/>
            <person name="Craven M.B."/>
            <person name="Radune D."/>
            <person name="Vamathevan J.J."/>
            <person name="Khouri H.M."/>
            <person name="White O."/>
            <person name="Gruber T.M."/>
            <person name="Ketchum K.A."/>
            <person name="Venter J.C."/>
            <person name="Tettelin H."/>
            <person name="Bryant D.A."/>
            <person name="Fraser C.M."/>
        </authorList>
    </citation>
    <scope>NUCLEOTIDE SEQUENCE [LARGE SCALE GENOMIC DNA]</scope>
    <source>
        <strain>ATCC 49652 / DSM 12025 / NBRC 103806 / TLS</strain>
    </source>
</reference>
<proteinExistence type="inferred from homology"/>
<protein>
    <recommendedName>
        <fullName evidence="1">Demethylmenaquinone methyltransferase</fullName>
        <ecNumber evidence="1">2.1.1.163</ecNumber>
    </recommendedName>
</protein>
<sequence length="242" mass="27307">MMSSSKETAKSLIQTKSRSSIRNMFDEVAPTYDFLNHLLSLGIDNYWRVVAAKKARKQLEGEREPKILDVATGTGDLAASMAKIPGAKVTGYDLSPEMLAIARKKYPNIEFLEGFAEKMPFDDRSFHVVSAGFGVRNFEDLAQGMKEFHRVLKPGGCAYIIEPMIPRNAVMKKLYLIYFKNVLPKIAGMFSKSTFAYDYLPNSVEQFPQAEAFTKILKNAGFKKAEYFPMTFETSILYVAMK</sequence>
<accession>Q8KF69</accession>
<gene>
    <name evidence="1" type="primary">menG</name>
    <name type="ordered locus">CT0462</name>
</gene>
<organism>
    <name type="scientific">Chlorobaculum tepidum (strain ATCC 49652 / DSM 12025 / NBRC 103806 / TLS)</name>
    <name type="common">Chlorobium tepidum</name>
    <dbReference type="NCBI Taxonomy" id="194439"/>
    <lineage>
        <taxon>Bacteria</taxon>
        <taxon>Pseudomonadati</taxon>
        <taxon>Chlorobiota</taxon>
        <taxon>Chlorobiia</taxon>
        <taxon>Chlorobiales</taxon>
        <taxon>Chlorobiaceae</taxon>
        <taxon>Chlorobaculum</taxon>
    </lineage>
</organism>
<keyword id="KW-0474">Menaquinone biosynthesis</keyword>
<keyword id="KW-0489">Methyltransferase</keyword>
<keyword id="KW-1185">Reference proteome</keyword>
<keyword id="KW-0949">S-adenosyl-L-methionine</keyword>
<keyword id="KW-0808">Transferase</keyword>